<reference key="1">
    <citation type="journal article" date="2003" name="Dev. Comp. Immunol.">
        <title>Characterization of beta(2)-microglobulin coding sequence from three non-placental mammals: the duckbill platypus, the short-beaked echidna, and the grey short-tailed opossum.</title>
        <authorList>
            <person name="Miska K.B."/>
            <person name="Hellman L."/>
            <person name="Miller R.D."/>
        </authorList>
    </citation>
    <scope>NUCLEOTIDE SEQUENCE [MRNA]</scope>
</reference>
<organism>
    <name type="scientific">Monodelphis domestica</name>
    <name type="common">Gray short-tailed opossum</name>
    <dbReference type="NCBI Taxonomy" id="13616"/>
    <lineage>
        <taxon>Eukaryota</taxon>
        <taxon>Metazoa</taxon>
        <taxon>Chordata</taxon>
        <taxon>Craniata</taxon>
        <taxon>Vertebrata</taxon>
        <taxon>Euteleostomi</taxon>
        <taxon>Mammalia</taxon>
        <taxon>Metatheria</taxon>
        <taxon>Didelphimorphia</taxon>
        <taxon>Didelphidae</taxon>
        <taxon>Monodelphis</taxon>
    </lineage>
</organism>
<protein>
    <recommendedName>
        <fullName>Beta-2-microglobulin</fullName>
    </recommendedName>
</protein>
<proteinExistence type="evidence at transcript level"/>
<evidence type="ECO:0000250" key="1"/>
<evidence type="ECO:0000255" key="2"/>
<evidence type="ECO:0000255" key="3">
    <source>
        <dbReference type="PROSITE-ProRule" id="PRU00114"/>
    </source>
</evidence>
<evidence type="ECO:0000305" key="4"/>
<accession>Q864T8</accession>
<name>B2MG_MONDO</name>
<comment type="function">
    <text evidence="1">Component of the class I major histocompatibility complex (MHC). Involved in the presentation of peptide antigens to the immune system (By similarity).</text>
</comment>
<comment type="subunit">
    <text evidence="1">Heterodimer of an alpha chain and a beta chain. Beta-2-microglobulin is the beta-chain of major histocompatibility complex class I molecules (By similarity).</text>
</comment>
<comment type="subcellular location">
    <subcellularLocation>
        <location evidence="1">Secreted</location>
    </subcellularLocation>
</comment>
<comment type="similarity">
    <text evidence="4">Belongs to the beta-2-microglobulin family.</text>
</comment>
<sequence length="123" mass="13964">MSRLFLFALLGHLCFLPYLDAITSSSGPPRVQVYSRYPPDSDKSNFLNCYVSGFHPPQITIELLKDGKKMENVEQSDLSFSKDWTFNLLVSAPFDPNSNSEFACKVTHSTLNEPKVVKWDKDN</sequence>
<gene>
    <name type="primary">B2M</name>
</gene>
<feature type="signal peptide" evidence="2">
    <location>
        <begin position="1"/>
        <end position="21"/>
    </location>
</feature>
<feature type="chain" id="PRO_0000041826" description="Beta-2-microglobulin">
    <location>
        <begin position="22"/>
        <end position="123"/>
    </location>
</feature>
<feature type="domain" description="Ig-like C1-type">
    <location>
        <begin position="29"/>
        <end position="118"/>
    </location>
</feature>
<feature type="disulfide bond" evidence="3">
    <location>
        <begin position="49"/>
        <end position="104"/>
    </location>
</feature>
<dbReference type="EMBL" id="AY125947">
    <property type="protein sequence ID" value="AAM98336.1"/>
    <property type="molecule type" value="mRNA"/>
</dbReference>
<dbReference type="RefSeq" id="NP_001028156.1">
    <property type="nucleotide sequence ID" value="NM_001032984.1"/>
</dbReference>
<dbReference type="SMR" id="Q864T8"/>
<dbReference type="FunCoup" id="Q864T8">
    <property type="interactions" value="300"/>
</dbReference>
<dbReference type="STRING" id="13616.ENSMODP00000053420"/>
<dbReference type="GeneID" id="554191"/>
<dbReference type="KEGG" id="mdo:554191"/>
<dbReference type="CTD" id="567"/>
<dbReference type="eggNOG" id="ENOG502S8GM">
    <property type="taxonomic scope" value="Eukaryota"/>
</dbReference>
<dbReference type="InParanoid" id="Q864T8"/>
<dbReference type="OrthoDB" id="9949628at2759"/>
<dbReference type="Proteomes" id="UP000002280">
    <property type="component" value="Unplaced"/>
</dbReference>
<dbReference type="GO" id="GO:0005576">
    <property type="term" value="C:extracellular region"/>
    <property type="evidence" value="ECO:0007669"/>
    <property type="project" value="UniProtKB-SubCell"/>
</dbReference>
<dbReference type="GO" id="GO:0031902">
    <property type="term" value="C:late endosome membrane"/>
    <property type="evidence" value="ECO:0000318"/>
    <property type="project" value="GO_Central"/>
</dbReference>
<dbReference type="GO" id="GO:0005765">
    <property type="term" value="C:lysosomal membrane"/>
    <property type="evidence" value="ECO:0000318"/>
    <property type="project" value="GO_Central"/>
</dbReference>
<dbReference type="GO" id="GO:0042612">
    <property type="term" value="C:MHC class I protein complex"/>
    <property type="evidence" value="ECO:0007669"/>
    <property type="project" value="UniProtKB-KW"/>
</dbReference>
<dbReference type="GO" id="GO:0042613">
    <property type="term" value="C:MHC class II protein complex"/>
    <property type="evidence" value="ECO:0000318"/>
    <property type="project" value="GO_Central"/>
</dbReference>
<dbReference type="GO" id="GO:0023026">
    <property type="term" value="F:MHC class II protein complex binding"/>
    <property type="evidence" value="ECO:0000318"/>
    <property type="project" value="GO_Central"/>
</dbReference>
<dbReference type="GO" id="GO:0042605">
    <property type="term" value="F:peptide antigen binding"/>
    <property type="evidence" value="ECO:0000318"/>
    <property type="project" value="GO_Central"/>
</dbReference>
<dbReference type="GO" id="GO:0019886">
    <property type="term" value="P:antigen processing and presentation of exogenous peptide antigen via MHC class II"/>
    <property type="evidence" value="ECO:0000318"/>
    <property type="project" value="GO_Central"/>
</dbReference>
<dbReference type="GO" id="GO:0002474">
    <property type="term" value="P:antigen processing and presentation of peptide antigen via MHC class I"/>
    <property type="evidence" value="ECO:0007669"/>
    <property type="project" value="UniProtKB-KW"/>
</dbReference>
<dbReference type="GO" id="GO:0002503">
    <property type="term" value="P:peptide antigen assembly with MHC class II protein complex"/>
    <property type="evidence" value="ECO:0000318"/>
    <property type="project" value="GO_Central"/>
</dbReference>
<dbReference type="GO" id="GO:0050778">
    <property type="term" value="P:positive regulation of immune response"/>
    <property type="evidence" value="ECO:0000318"/>
    <property type="project" value="GO_Central"/>
</dbReference>
<dbReference type="GO" id="GO:0050870">
    <property type="term" value="P:positive regulation of T cell activation"/>
    <property type="evidence" value="ECO:0000318"/>
    <property type="project" value="GO_Central"/>
</dbReference>
<dbReference type="FunFam" id="2.60.40.10:FF:001005">
    <property type="entry name" value="Beta-2-microglobulin"/>
    <property type="match status" value="1"/>
</dbReference>
<dbReference type="Gene3D" id="2.60.40.10">
    <property type="entry name" value="Immunoglobulins"/>
    <property type="match status" value="1"/>
</dbReference>
<dbReference type="InterPro" id="IPR007110">
    <property type="entry name" value="Ig-like_dom"/>
</dbReference>
<dbReference type="InterPro" id="IPR036179">
    <property type="entry name" value="Ig-like_dom_sf"/>
</dbReference>
<dbReference type="InterPro" id="IPR013783">
    <property type="entry name" value="Ig-like_fold"/>
</dbReference>
<dbReference type="InterPro" id="IPR003006">
    <property type="entry name" value="Ig/MHC_CS"/>
</dbReference>
<dbReference type="InterPro" id="IPR003597">
    <property type="entry name" value="Ig_C1-set"/>
</dbReference>
<dbReference type="InterPro" id="IPR050160">
    <property type="entry name" value="MHC/Immunoglobulin"/>
</dbReference>
<dbReference type="PANTHER" id="PTHR19944:SF62">
    <property type="entry name" value="BETA-2-MICROGLOBULIN"/>
    <property type="match status" value="1"/>
</dbReference>
<dbReference type="PANTHER" id="PTHR19944">
    <property type="entry name" value="MHC CLASS II-RELATED"/>
    <property type="match status" value="1"/>
</dbReference>
<dbReference type="Pfam" id="PF07654">
    <property type="entry name" value="C1-set"/>
    <property type="match status" value="1"/>
</dbReference>
<dbReference type="SMART" id="SM00407">
    <property type="entry name" value="IGc1"/>
    <property type="match status" value="1"/>
</dbReference>
<dbReference type="SUPFAM" id="SSF48726">
    <property type="entry name" value="Immunoglobulin"/>
    <property type="match status" value="1"/>
</dbReference>
<dbReference type="PROSITE" id="PS50835">
    <property type="entry name" value="IG_LIKE"/>
    <property type="match status" value="1"/>
</dbReference>
<dbReference type="PROSITE" id="PS00290">
    <property type="entry name" value="IG_MHC"/>
    <property type="match status" value="1"/>
</dbReference>
<keyword id="KW-1015">Disulfide bond</keyword>
<keyword id="KW-0391">Immunity</keyword>
<keyword id="KW-0393">Immunoglobulin domain</keyword>
<keyword id="KW-0490">MHC I</keyword>
<keyword id="KW-1185">Reference proteome</keyword>
<keyword id="KW-0964">Secreted</keyword>
<keyword id="KW-0732">Signal</keyword>